<accession>Q0BDU3</accession>
<name>MUTS_BURCM</name>
<protein>
    <recommendedName>
        <fullName evidence="1">DNA mismatch repair protein MutS</fullName>
    </recommendedName>
</protein>
<evidence type="ECO:0000255" key="1">
    <source>
        <dbReference type="HAMAP-Rule" id="MF_00096"/>
    </source>
</evidence>
<reference key="1">
    <citation type="submission" date="2006-08" db="EMBL/GenBank/DDBJ databases">
        <title>Complete sequence of chromosome 1 of Burkholderia cepacia AMMD.</title>
        <authorList>
            <person name="Copeland A."/>
            <person name="Lucas S."/>
            <person name="Lapidus A."/>
            <person name="Barry K."/>
            <person name="Detter J.C."/>
            <person name="Glavina del Rio T."/>
            <person name="Hammon N."/>
            <person name="Israni S."/>
            <person name="Pitluck S."/>
            <person name="Bruce D."/>
            <person name="Chain P."/>
            <person name="Malfatti S."/>
            <person name="Shin M."/>
            <person name="Vergez L."/>
            <person name="Schmutz J."/>
            <person name="Larimer F."/>
            <person name="Land M."/>
            <person name="Hauser L."/>
            <person name="Kyrpides N."/>
            <person name="Kim E."/>
            <person name="Parke J."/>
            <person name="Coenye T."/>
            <person name="Konstantinidis K."/>
            <person name="Ramette A."/>
            <person name="Tiedje J."/>
            <person name="Richardson P."/>
        </authorList>
    </citation>
    <scope>NUCLEOTIDE SEQUENCE [LARGE SCALE GENOMIC DNA]</scope>
    <source>
        <strain>ATCC BAA-244 / DSM 16087 / CCUG 44356 / LMG 19182 / AMMD</strain>
    </source>
</reference>
<keyword id="KW-0067">ATP-binding</keyword>
<keyword id="KW-0227">DNA damage</keyword>
<keyword id="KW-0234">DNA repair</keyword>
<keyword id="KW-0238">DNA-binding</keyword>
<keyword id="KW-0547">Nucleotide-binding</keyword>
<comment type="function">
    <text evidence="1">This protein is involved in the repair of mismatches in DNA. It is possible that it carries out the mismatch recognition step. This protein has a weak ATPase activity.</text>
</comment>
<comment type="similarity">
    <text evidence="1">Belongs to the DNA mismatch repair MutS family.</text>
</comment>
<feature type="chain" id="PRO_1000008050" description="DNA mismatch repair protein MutS">
    <location>
        <begin position="1"/>
        <end position="886"/>
    </location>
</feature>
<feature type="binding site" evidence="1">
    <location>
        <begin position="626"/>
        <end position="633"/>
    </location>
    <ligand>
        <name>ATP</name>
        <dbReference type="ChEBI" id="CHEBI:30616"/>
    </ligand>
</feature>
<proteinExistence type="inferred from homology"/>
<sequence>MTTLSPEAFAGHTPMMQQYLRIKADHPDTLVFYRMGDFYELFFEDAEKAARLLDLTLTQRGASAGTPIKMAGVPHHAVEQYLAKLVKMGESVAICEQIGDPATSKGPVERKVVRVVTPGTLTDAALLSDKNDVYLLAMCTGHNKRGVAVNIGLAWLNLASGALRLAEIEPDQLGTALERIRPAEILTADGATDAVPAGAGAIKRVPAWHFDIASGTQRLCDQLDVAGLDGFGAHSLTSACGAAGALLLYAAATQGQQLRHVRSLKVENETEYIGLDPATRRNLELTETLRGTESPTLYSLLDTCCTTMGSRLLRHWLHHPPRASVAAQSRQQAIGALLDAPADASLDALRSALRQIADVERITGRLALLSARPRDLSSLRDTFAALPALRERISAIVANADALTRVDAALAPPAECLDLLTSAIAPEPAAMVRDGGVIARGYDAELDELRDISENCGQFLIDLEARERTRTGIANLRVEYNKVHGFYIEVTRGQTDKVPDDYRRRQTLKNAERYITPELKTFEDKALSAQERALARERALYDGVLQALLPFIPECQRVASALAELDVLAAFAERARTLDWVAPTFTDEIGIEIEQGRHPVVEAQVEQFIANDCRFGAERKLLLITGPNMGGKSTFMRQTALIALMAYVGSYVPAKSACFGPIDRIFTRIGAADDLAGGRSTFMVEMTEAAAILNDATPQSLVLMDEIGRGTSTFDGLALAWAIARHLLAQNGCYTLFATHYFELTQLPAEFPQAANVHLSAVEHGHGIVFLHAVNEGPANQSYGLQVAQLAGVPAPVIRAARKHLAYLEQQSATQNTPQLDLFSAPPAAAADELECADAPAVSALPHPALEKLRDIDPDDLKPRDALDLLYELRTLVRSHDADGHA</sequence>
<gene>
    <name evidence="1" type="primary">mutS</name>
    <name type="ordered locus">Bamb_2124</name>
</gene>
<organism>
    <name type="scientific">Burkholderia ambifaria (strain ATCC BAA-244 / DSM 16087 / CCUG 44356 / LMG 19182 / AMMD)</name>
    <name type="common">Burkholderia cepacia (strain AMMD)</name>
    <dbReference type="NCBI Taxonomy" id="339670"/>
    <lineage>
        <taxon>Bacteria</taxon>
        <taxon>Pseudomonadati</taxon>
        <taxon>Pseudomonadota</taxon>
        <taxon>Betaproteobacteria</taxon>
        <taxon>Burkholderiales</taxon>
        <taxon>Burkholderiaceae</taxon>
        <taxon>Burkholderia</taxon>
        <taxon>Burkholderia cepacia complex</taxon>
    </lineage>
</organism>
<dbReference type="EMBL" id="CP000440">
    <property type="protein sequence ID" value="ABI87680.1"/>
    <property type="molecule type" value="Genomic_DNA"/>
</dbReference>
<dbReference type="RefSeq" id="WP_011657346.1">
    <property type="nucleotide sequence ID" value="NC_008390.1"/>
</dbReference>
<dbReference type="SMR" id="Q0BDU3"/>
<dbReference type="GeneID" id="93085670"/>
<dbReference type="KEGG" id="bam:Bamb_2124"/>
<dbReference type="eggNOG" id="COG0249">
    <property type="taxonomic scope" value="Bacteria"/>
</dbReference>
<dbReference type="Proteomes" id="UP000000662">
    <property type="component" value="Chromosome 1"/>
</dbReference>
<dbReference type="GO" id="GO:0005829">
    <property type="term" value="C:cytosol"/>
    <property type="evidence" value="ECO:0007669"/>
    <property type="project" value="TreeGrafter"/>
</dbReference>
<dbReference type="GO" id="GO:0005524">
    <property type="term" value="F:ATP binding"/>
    <property type="evidence" value="ECO:0007669"/>
    <property type="project" value="UniProtKB-UniRule"/>
</dbReference>
<dbReference type="GO" id="GO:0140664">
    <property type="term" value="F:ATP-dependent DNA damage sensor activity"/>
    <property type="evidence" value="ECO:0007669"/>
    <property type="project" value="InterPro"/>
</dbReference>
<dbReference type="GO" id="GO:0003684">
    <property type="term" value="F:damaged DNA binding"/>
    <property type="evidence" value="ECO:0007669"/>
    <property type="project" value="UniProtKB-UniRule"/>
</dbReference>
<dbReference type="GO" id="GO:0030983">
    <property type="term" value="F:mismatched DNA binding"/>
    <property type="evidence" value="ECO:0007669"/>
    <property type="project" value="InterPro"/>
</dbReference>
<dbReference type="GO" id="GO:0006298">
    <property type="term" value="P:mismatch repair"/>
    <property type="evidence" value="ECO:0007669"/>
    <property type="project" value="UniProtKB-UniRule"/>
</dbReference>
<dbReference type="CDD" id="cd03284">
    <property type="entry name" value="ABC_MutS1"/>
    <property type="match status" value="1"/>
</dbReference>
<dbReference type="FunFam" id="3.40.1170.10:FF:000001">
    <property type="entry name" value="DNA mismatch repair protein MutS"/>
    <property type="match status" value="1"/>
</dbReference>
<dbReference type="FunFam" id="3.40.50.300:FF:000870">
    <property type="entry name" value="MutS protein homolog 4"/>
    <property type="match status" value="1"/>
</dbReference>
<dbReference type="Gene3D" id="1.10.1420.10">
    <property type="match status" value="2"/>
</dbReference>
<dbReference type="Gene3D" id="6.10.140.430">
    <property type="match status" value="1"/>
</dbReference>
<dbReference type="Gene3D" id="3.40.1170.10">
    <property type="entry name" value="DNA repair protein MutS, domain I"/>
    <property type="match status" value="1"/>
</dbReference>
<dbReference type="Gene3D" id="3.30.420.110">
    <property type="entry name" value="MutS, connector domain"/>
    <property type="match status" value="1"/>
</dbReference>
<dbReference type="Gene3D" id="3.40.50.300">
    <property type="entry name" value="P-loop containing nucleotide triphosphate hydrolases"/>
    <property type="match status" value="1"/>
</dbReference>
<dbReference type="HAMAP" id="MF_00096">
    <property type="entry name" value="MutS"/>
    <property type="match status" value="1"/>
</dbReference>
<dbReference type="InterPro" id="IPR005748">
    <property type="entry name" value="DNA_mismatch_repair_MutS"/>
</dbReference>
<dbReference type="InterPro" id="IPR007695">
    <property type="entry name" value="DNA_mismatch_repair_MutS-lik_N"/>
</dbReference>
<dbReference type="InterPro" id="IPR017261">
    <property type="entry name" value="DNA_mismatch_repair_MutS/MSH"/>
</dbReference>
<dbReference type="InterPro" id="IPR000432">
    <property type="entry name" value="DNA_mismatch_repair_MutS_C"/>
</dbReference>
<dbReference type="InterPro" id="IPR007861">
    <property type="entry name" value="DNA_mismatch_repair_MutS_clamp"/>
</dbReference>
<dbReference type="InterPro" id="IPR007696">
    <property type="entry name" value="DNA_mismatch_repair_MutS_core"/>
</dbReference>
<dbReference type="InterPro" id="IPR016151">
    <property type="entry name" value="DNA_mismatch_repair_MutS_N"/>
</dbReference>
<dbReference type="InterPro" id="IPR036187">
    <property type="entry name" value="DNA_mismatch_repair_MutS_sf"/>
</dbReference>
<dbReference type="InterPro" id="IPR007860">
    <property type="entry name" value="DNA_mmatch_repair_MutS_con_dom"/>
</dbReference>
<dbReference type="InterPro" id="IPR045076">
    <property type="entry name" value="MutS"/>
</dbReference>
<dbReference type="InterPro" id="IPR036678">
    <property type="entry name" value="MutS_con_dom_sf"/>
</dbReference>
<dbReference type="InterPro" id="IPR027417">
    <property type="entry name" value="P-loop_NTPase"/>
</dbReference>
<dbReference type="NCBIfam" id="TIGR01070">
    <property type="entry name" value="mutS1"/>
    <property type="match status" value="1"/>
</dbReference>
<dbReference type="NCBIfam" id="NF003810">
    <property type="entry name" value="PRK05399.1"/>
    <property type="match status" value="1"/>
</dbReference>
<dbReference type="PANTHER" id="PTHR11361:SF34">
    <property type="entry name" value="DNA MISMATCH REPAIR PROTEIN MSH1, MITOCHONDRIAL"/>
    <property type="match status" value="1"/>
</dbReference>
<dbReference type="PANTHER" id="PTHR11361">
    <property type="entry name" value="DNA MISMATCH REPAIR PROTEIN MUTS FAMILY MEMBER"/>
    <property type="match status" value="1"/>
</dbReference>
<dbReference type="Pfam" id="PF01624">
    <property type="entry name" value="MutS_I"/>
    <property type="match status" value="1"/>
</dbReference>
<dbReference type="Pfam" id="PF05188">
    <property type="entry name" value="MutS_II"/>
    <property type="match status" value="1"/>
</dbReference>
<dbReference type="Pfam" id="PF05192">
    <property type="entry name" value="MutS_III"/>
    <property type="match status" value="1"/>
</dbReference>
<dbReference type="Pfam" id="PF05190">
    <property type="entry name" value="MutS_IV"/>
    <property type="match status" value="1"/>
</dbReference>
<dbReference type="Pfam" id="PF00488">
    <property type="entry name" value="MutS_V"/>
    <property type="match status" value="1"/>
</dbReference>
<dbReference type="PIRSF" id="PIRSF037677">
    <property type="entry name" value="DNA_mis_repair_Msh6"/>
    <property type="match status" value="1"/>
</dbReference>
<dbReference type="SMART" id="SM00534">
    <property type="entry name" value="MUTSac"/>
    <property type="match status" value="1"/>
</dbReference>
<dbReference type="SMART" id="SM00533">
    <property type="entry name" value="MUTSd"/>
    <property type="match status" value="1"/>
</dbReference>
<dbReference type="SUPFAM" id="SSF55271">
    <property type="entry name" value="DNA repair protein MutS, domain I"/>
    <property type="match status" value="1"/>
</dbReference>
<dbReference type="SUPFAM" id="SSF53150">
    <property type="entry name" value="DNA repair protein MutS, domain II"/>
    <property type="match status" value="1"/>
</dbReference>
<dbReference type="SUPFAM" id="SSF48334">
    <property type="entry name" value="DNA repair protein MutS, domain III"/>
    <property type="match status" value="1"/>
</dbReference>
<dbReference type="SUPFAM" id="SSF52540">
    <property type="entry name" value="P-loop containing nucleoside triphosphate hydrolases"/>
    <property type="match status" value="1"/>
</dbReference>
<dbReference type="PROSITE" id="PS00486">
    <property type="entry name" value="DNA_MISMATCH_REPAIR_2"/>
    <property type="match status" value="1"/>
</dbReference>